<gene>
    <name evidence="2" type="primary">psbD</name>
</gene>
<sequence>MTIALGKFTKDENDLFDIMDDWLRRDRFVFVGWSGLLLFPCAYFAVGGWFTGTTFVTSWYTHGLASSYLEGCNFLTAAVSTPANSLAHSLLLLWGPEAQGDFTRWCQLGGLWTFVALHGAFGLIGFMLRQFELARSVQLRPYNAIAFSGPIAVFVSVFLIYPLGQSGWFFAPSFGVAAIFRFILFFQGFHNWTLNPFHMMGVAGVLGAALLCAIHGATVENTLFEDGDGANTFRAFNPTQAEETYSMVTANRFWSQIFGVAFSNKRWLHFFMLFVPVTGLWMSALGVVGLALNLRAYDFVSQEIRAAEDPEFETFYTKNILLNEGIRAWMAAQDQPHENLIFPEEVLPRGNAL</sequence>
<geneLocation type="chloroplast"/>
<keyword id="KW-0007">Acetylation</keyword>
<keyword id="KW-0148">Chlorophyll</keyword>
<keyword id="KW-0150">Chloroplast</keyword>
<keyword id="KW-0157">Chromophore</keyword>
<keyword id="KW-0249">Electron transport</keyword>
<keyword id="KW-0408">Iron</keyword>
<keyword id="KW-0460">Magnesium</keyword>
<keyword id="KW-0472">Membrane</keyword>
<keyword id="KW-0479">Metal-binding</keyword>
<keyword id="KW-0560">Oxidoreductase</keyword>
<keyword id="KW-0597">Phosphoprotein</keyword>
<keyword id="KW-0602">Photosynthesis</keyword>
<keyword id="KW-0604">Photosystem II</keyword>
<keyword id="KW-0934">Plastid</keyword>
<keyword id="KW-0793">Thylakoid</keyword>
<keyword id="KW-0812">Transmembrane</keyword>
<keyword id="KW-1133">Transmembrane helix</keyword>
<keyword id="KW-0813">Transport</keyword>
<dbReference type="EC" id="1.10.3.9" evidence="2"/>
<dbReference type="EMBL" id="EU117376">
    <property type="protein sequence ID" value="ABV66149.1"/>
    <property type="molecule type" value="Genomic_DNA"/>
</dbReference>
<dbReference type="RefSeq" id="YP_001718432.1">
    <property type="nucleotide sequence ID" value="NC_010433.1"/>
</dbReference>
<dbReference type="SMR" id="B1NWE5"/>
<dbReference type="GeneID" id="6000044"/>
<dbReference type="KEGG" id="mesc:6000044"/>
<dbReference type="OrthoDB" id="809900at2759"/>
<dbReference type="GO" id="GO:0009535">
    <property type="term" value="C:chloroplast thylakoid membrane"/>
    <property type="evidence" value="ECO:0007669"/>
    <property type="project" value="UniProtKB-SubCell"/>
</dbReference>
<dbReference type="GO" id="GO:0009523">
    <property type="term" value="C:photosystem II"/>
    <property type="evidence" value="ECO:0007669"/>
    <property type="project" value="UniProtKB-KW"/>
</dbReference>
<dbReference type="GO" id="GO:0016168">
    <property type="term" value="F:chlorophyll binding"/>
    <property type="evidence" value="ECO:0007669"/>
    <property type="project" value="UniProtKB-UniRule"/>
</dbReference>
<dbReference type="GO" id="GO:0045156">
    <property type="term" value="F:electron transporter, transferring electrons within the cyclic electron transport pathway of photosynthesis activity"/>
    <property type="evidence" value="ECO:0007669"/>
    <property type="project" value="InterPro"/>
</dbReference>
<dbReference type="GO" id="GO:0005506">
    <property type="term" value="F:iron ion binding"/>
    <property type="evidence" value="ECO:0007669"/>
    <property type="project" value="UniProtKB-UniRule"/>
</dbReference>
<dbReference type="GO" id="GO:0010242">
    <property type="term" value="F:oxygen evolving activity"/>
    <property type="evidence" value="ECO:0007669"/>
    <property type="project" value="UniProtKB-EC"/>
</dbReference>
<dbReference type="GO" id="GO:0009772">
    <property type="term" value="P:photosynthetic electron transport in photosystem II"/>
    <property type="evidence" value="ECO:0007669"/>
    <property type="project" value="InterPro"/>
</dbReference>
<dbReference type="CDD" id="cd09288">
    <property type="entry name" value="Photosystem-II_D2"/>
    <property type="match status" value="1"/>
</dbReference>
<dbReference type="FunFam" id="1.20.85.10:FF:000001">
    <property type="entry name" value="photosystem II D2 protein-like"/>
    <property type="match status" value="1"/>
</dbReference>
<dbReference type="Gene3D" id="1.20.85.10">
    <property type="entry name" value="Photosystem II protein D1-like"/>
    <property type="match status" value="1"/>
</dbReference>
<dbReference type="HAMAP" id="MF_01383">
    <property type="entry name" value="PSII_PsbD_D2"/>
    <property type="match status" value="1"/>
</dbReference>
<dbReference type="InterPro" id="IPR055266">
    <property type="entry name" value="D1/D2"/>
</dbReference>
<dbReference type="InterPro" id="IPR036854">
    <property type="entry name" value="Photo_II_D1/D2_sf"/>
</dbReference>
<dbReference type="InterPro" id="IPR000484">
    <property type="entry name" value="Photo_RC_L/M"/>
</dbReference>
<dbReference type="InterPro" id="IPR055265">
    <property type="entry name" value="Photo_RC_L/M_CS"/>
</dbReference>
<dbReference type="InterPro" id="IPR005868">
    <property type="entry name" value="PSII_PsbD/D2"/>
</dbReference>
<dbReference type="NCBIfam" id="TIGR01152">
    <property type="entry name" value="psbD"/>
    <property type="match status" value="1"/>
</dbReference>
<dbReference type="PANTHER" id="PTHR33149:SF12">
    <property type="entry name" value="PHOTOSYSTEM II D2 PROTEIN"/>
    <property type="match status" value="1"/>
</dbReference>
<dbReference type="PANTHER" id="PTHR33149">
    <property type="entry name" value="PHOTOSYSTEM II PROTEIN D1"/>
    <property type="match status" value="1"/>
</dbReference>
<dbReference type="Pfam" id="PF00124">
    <property type="entry name" value="Photo_RC"/>
    <property type="match status" value="1"/>
</dbReference>
<dbReference type="PRINTS" id="PR00256">
    <property type="entry name" value="REACTNCENTRE"/>
</dbReference>
<dbReference type="SUPFAM" id="SSF81483">
    <property type="entry name" value="Bacterial photosystem II reaction centre, L and M subunits"/>
    <property type="match status" value="1"/>
</dbReference>
<dbReference type="PROSITE" id="PS00244">
    <property type="entry name" value="REACTION_CENTER"/>
    <property type="match status" value="1"/>
</dbReference>
<comment type="function">
    <text evidence="2">Photosystem II (PSII) is a light-driven water:plastoquinone oxidoreductase that uses light energy to abstract electrons from H(2)O, generating O(2) and a proton gradient subsequently used for ATP formation. It consists of a core antenna complex that captures photons, and an electron transfer chain that converts photonic excitation into a charge separation. The D1/D2 (PsbA/PsbD) reaction center heterodimer binds P680, the primary electron donor of PSII as well as several subsequent electron acceptors. D2 is needed for assembly of a stable PSII complex.</text>
</comment>
<comment type="catalytic activity">
    <reaction evidence="2">
        <text>2 a plastoquinone + 4 hnu + 2 H2O = 2 a plastoquinol + O2</text>
        <dbReference type="Rhea" id="RHEA:36359"/>
        <dbReference type="Rhea" id="RHEA-COMP:9561"/>
        <dbReference type="Rhea" id="RHEA-COMP:9562"/>
        <dbReference type="ChEBI" id="CHEBI:15377"/>
        <dbReference type="ChEBI" id="CHEBI:15379"/>
        <dbReference type="ChEBI" id="CHEBI:17757"/>
        <dbReference type="ChEBI" id="CHEBI:30212"/>
        <dbReference type="ChEBI" id="CHEBI:62192"/>
        <dbReference type="EC" id="1.10.3.9"/>
    </reaction>
</comment>
<comment type="cofactor">
    <text evidence="2">The D1/D2 heterodimer binds P680, chlorophylls that are the primary electron donor of PSII, and subsequent electron acceptors. It shares a non-heme iron and each subunit binds pheophytin, quinone, additional chlorophylls, carotenoids and lipids. There is also a Cl(-1) ion associated with D1 and D2, which is required for oxygen evolution. The PSII complex binds additional chlorophylls, carotenoids and specific lipids.</text>
</comment>
<comment type="subunit">
    <text evidence="2">PSII is composed of 1 copy each of membrane proteins PsbA, PsbB, PsbC, PsbD, PsbE, PsbF, PsbH, PsbI, PsbJ, PsbK, PsbL, PsbM, PsbT, PsbX, PsbY, PsbZ, Psb30/Ycf12, at least 3 peripheral proteins of the oxygen-evolving complex and a large number of cofactors. It forms dimeric complexes.</text>
</comment>
<comment type="subcellular location">
    <subcellularLocation>
        <location evidence="2">Plastid</location>
        <location evidence="2">Chloroplast thylakoid membrane</location>
        <topology evidence="2">Multi-pass membrane protein</topology>
    </subcellularLocation>
</comment>
<comment type="miscellaneous">
    <text evidence="2">2 of the reaction center chlorophylls (ChlD1 and ChlD2) are entirely coordinated by water.</text>
</comment>
<comment type="similarity">
    <text evidence="2">Belongs to the reaction center PufL/M/PsbA/D family.</text>
</comment>
<evidence type="ECO:0000250" key="1">
    <source>
        <dbReference type="UniProtKB" id="P56761"/>
    </source>
</evidence>
<evidence type="ECO:0000255" key="2">
    <source>
        <dbReference type="HAMAP-Rule" id="MF_01383"/>
    </source>
</evidence>
<name>PSBD_MANES</name>
<reference key="1">
    <citation type="journal article" date="2008" name="Theor. Appl. Genet.">
        <title>The complete nucleotide sequence of the cassava (Manihot esculenta) chloroplast genome and the evolution of atpF in Malpighiales: RNA editing and multiple losses of a group II intron.</title>
        <authorList>
            <person name="Daniell H."/>
            <person name="Wurdack K.J."/>
            <person name="Kanagaraj A."/>
            <person name="Lee S.-B."/>
            <person name="Saski C."/>
            <person name="Jansen R.K."/>
        </authorList>
    </citation>
    <scope>NUCLEOTIDE SEQUENCE [LARGE SCALE GENOMIC DNA]</scope>
    <source>
        <strain>cv. TME3</strain>
    </source>
</reference>
<accession>B1NWE5</accession>
<proteinExistence type="inferred from homology"/>
<protein>
    <recommendedName>
        <fullName evidence="2">Photosystem II D2 protein</fullName>
        <shortName evidence="2">PSII D2 protein</shortName>
        <ecNumber evidence="2">1.10.3.9</ecNumber>
    </recommendedName>
    <alternativeName>
        <fullName evidence="2">Photosystem Q(A) protein</fullName>
    </alternativeName>
</protein>
<feature type="initiator methionine" description="Removed" evidence="1">
    <location>
        <position position="1"/>
    </location>
</feature>
<feature type="chain" id="PRO_0000359667" description="Photosystem II D2 protein">
    <location>
        <begin position="2"/>
        <end position="353"/>
    </location>
</feature>
<feature type="transmembrane region" description="Helical" evidence="2">
    <location>
        <begin position="41"/>
        <end position="61"/>
    </location>
</feature>
<feature type="transmembrane region" description="Helical" evidence="2">
    <location>
        <begin position="125"/>
        <end position="141"/>
    </location>
</feature>
<feature type="transmembrane region" description="Helical" evidence="2">
    <location>
        <begin position="153"/>
        <end position="166"/>
    </location>
</feature>
<feature type="transmembrane region" description="Helical" evidence="2">
    <location>
        <begin position="208"/>
        <end position="228"/>
    </location>
</feature>
<feature type="transmembrane region" description="Helical" evidence="2">
    <location>
        <begin position="279"/>
        <end position="295"/>
    </location>
</feature>
<feature type="binding site" description="axial binding residue" evidence="2">
    <location>
        <position position="118"/>
    </location>
    <ligand>
        <name>chlorophyll a</name>
        <dbReference type="ChEBI" id="CHEBI:58416"/>
        <label>ChlzD2</label>
    </ligand>
    <ligandPart>
        <name>Mg</name>
        <dbReference type="ChEBI" id="CHEBI:25107"/>
    </ligandPart>
</feature>
<feature type="binding site" evidence="2">
    <location>
        <position position="130"/>
    </location>
    <ligand>
        <name>pheophytin a</name>
        <dbReference type="ChEBI" id="CHEBI:136840"/>
        <label>D2</label>
    </ligand>
</feature>
<feature type="binding site" evidence="2">
    <location>
        <position position="143"/>
    </location>
    <ligand>
        <name>pheophytin a</name>
        <dbReference type="ChEBI" id="CHEBI:136840"/>
        <label>D2</label>
    </ligand>
</feature>
<feature type="binding site" description="axial binding residue" evidence="2">
    <location>
        <position position="198"/>
    </location>
    <ligand>
        <name>chlorophyll a</name>
        <dbReference type="ChEBI" id="CHEBI:58416"/>
        <label>PD2</label>
    </ligand>
    <ligandPart>
        <name>Mg</name>
        <dbReference type="ChEBI" id="CHEBI:25107"/>
    </ligandPart>
</feature>
<feature type="binding site" evidence="2">
    <location>
        <position position="215"/>
    </location>
    <ligand>
        <name>a plastoquinone</name>
        <dbReference type="ChEBI" id="CHEBI:17757"/>
        <label>Q(A)</label>
    </ligand>
</feature>
<feature type="binding site" evidence="2">
    <location>
        <position position="215"/>
    </location>
    <ligand>
        <name>Fe cation</name>
        <dbReference type="ChEBI" id="CHEBI:24875"/>
        <note>ligand shared with heterodimeric partner</note>
    </ligand>
</feature>
<feature type="binding site" evidence="2">
    <location>
        <position position="262"/>
    </location>
    <ligand>
        <name>a plastoquinone</name>
        <dbReference type="ChEBI" id="CHEBI:17757"/>
        <label>Q(A)</label>
    </ligand>
</feature>
<feature type="binding site" evidence="2">
    <location>
        <position position="269"/>
    </location>
    <ligand>
        <name>Fe cation</name>
        <dbReference type="ChEBI" id="CHEBI:24875"/>
        <note>ligand shared with heterodimeric partner</note>
    </ligand>
</feature>
<feature type="modified residue" description="N-acetylthreonine" evidence="1">
    <location>
        <position position="2"/>
    </location>
</feature>
<feature type="modified residue" description="Phosphothreonine" evidence="1">
    <location>
        <position position="2"/>
    </location>
</feature>
<organism>
    <name type="scientific">Manihot esculenta</name>
    <name type="common">Cassava</name>
    <name type="synonym">Jatropha manihot</name>
    <dbReference type="NCBI Taxonomy" id="3983"/>
    <lineage>
        <taxon>Eukaryota</taxon>
        <taxon>Viridiplantae</taxon>
        <taxon>Streptophyta</taxon>
        <taxon>Embryophyta</taxon>
        <taxon>Tracheophyta</taxon>
        <taxon>Spermatophyta</taxon>
        <taxon>Magnoliopsida</taxon>
        <taxon>eudicotyledons</taxon>
        <taxon>Gunneridae</taxon>
        <taxon>Pentapetalae</taxon>
        <taxon>rosids</taxon>
        <taxon>fabids</taxon>
        <taxon>Malpighiales</taxon>
        <taxon>Euphorbiaceae</taxon>
        <taxon>Crotonoideae</taxon>
        <taxon>Manihoteae</taxon>
        <taxon>Manihot</taxon>
    </lineage>
</organism>